<organism>
    <name type="scientific">Dictyostelium discoideum</name>
    <name type="common">Social amoeba</name>
    <dbReference type="NCBI Taxonomy" id="44689"/>
    <lineage>
        <taxon>Eukaryota</taxon>
        <taxon>Amoebozoa</taxon>
        <taxon>Evosea</taxon>
        <taxon>Eumycetozoa</taxon>
        <taxon>Dictyostelia</taxon>
        <taxon>Dictyosteliales</taxon>
        <taxon>Dictyosteliaceae</taxon>
        <taxon>Dictyostelium</taxon>
    </lineage>
</organism>
<accession>Q54HR6</accession>
<feature type="chain" id="PRO_0000327218" description="Probable DNA replication complex GINS protein PSF1">
    <location>
        <begin position="1"/>
        <end position="191"/>
    </location>
</feature>
<gene>
    <name type="primary">gins1</name>
    <name type="ORF">DDB_G0289271</name>
</gene>
<protein>
    <recommendedName>
        <fullName>Probable DNA replication complex GINS protein PSF1</fullName>
    </recommendedName>
    <alternativeName>
        <fullName>GINS complex subunit 1</fullName>
    </alternativeName>
</protein>
<name>PSF1_DICDI</name>
<dbReference type="EMBL" id="AAFI02000133">
    <property type="protein sequence ID" value="EAL62807.1"/>
    <property type="molecule type" value="Genomic_DNA"/>
</dbReference>
<dbReference type="RefSeq" id="XP_636320.1">
    <property type="nucleotide sequence ID" value="XM_631228.1"/>
</dbReference>
<dbReference type="SMR" id="Q54HR6"/>
<dbReference type="FunCoup" id="Q54HR6">
    <property type="interactions" value="297"/>
</dbReference>
<dbReference type="STRING" id="44689.Q54HR6"/>
<dbReference type="PaxDb" id="44689-DDB0266353"/>
<dbReference type="EnsemblProtists" id="EAL62807">
    <property type="protein sequence ID" value="EAL62807"/>
    <property type="gene ID" value="DDB_G0289271"/>
</dbReference>
<dbReference type="GeneID" id="8627047"/>
<dbReference type="KEGG" id="ddi:DDB_G0289271"/>
<dbReference type="dictyBase" id="DDB_G0289271">
    <property type="gene designation" value="gins1"/>
</dbReference>
<dbReference type="VEuPathDB" id="AmoebaDB:DDB_G0289271"/>
<dbReference type="eggNOG" id="KOG3303">
    <property type="taxonomic scope" value="Eukaryota"/>
</dbReference>
<dbReference type="HOGENOM" id="CLU_079191_1_0_1"/>
<dbReference type="InParanoid" id="Q54HR6"/>
<dbReference type="OMA" id="MFCEKAT"/>
<dbReference type="PhylomeDB" id="Q54HR6"/>
<dbReference type="Reactome" id="R-DDI-176974">
    <property type="pathway name" value="Unwinding of DNA"/>
</dbReference>
<dbReference type="PRO" id="PR:Q54HR6"/>
<dbReference type="Proteomes" id="UP000002195">
    <property type="component" value="Chromosome 5"/>
</dbReference>
<dbReference type="GO" id="GO:0000811">
    <property type="term" value="C:GINS complex"/>
    <property type="evidence" value="ECO:0000250"/>
    <property type="project" value="dictyBase"/>
</dbReference>
<dbReference type="GO" id="GO:0006260">
    <property type="term" value="P:DNA replication"/>
    <property type="evidence" value="ECO:0000250"/>
    <property type="project" value="dictyBase"/>
</dbReference>
<dbReference type="GO" id="GO:1902983">
    <property type="term" value="P:DNA strand elongation involved in mitotic DNA replication"/>
    <property type="evidence" value="ECO:0000318"/>
    <property type="project" value="GO_Central"/>
</dbReference>
<dbReference type="CDD" id="cd11710">
    <property type="entry name" value="GINS_A_psf1"/>
    <property type="match status" value="1"/>
</dbReference>
<dbReference type="CDD" id="cd21696">
    <property type="entry name" value="GINS_B_Psf1"/>
    <property type="match status" value="1"/>
</dbReference>
<dbReference type="Gene3D" id="1.20.58.1030">
    <property type="match status" value="1"/>
</dbReference>
<dbReference type="InterPro" id="IPR021151">
    <property type="entry name" value="GINS_A"/>
</dbReference>
<dbReference type="InterPro" id="IPR036224">
    <property type="entry name" value="GINS_bundle-like_dom_sf"/>
</dbReference>
<dbReference type="InterPro" id="IPR005339">
    <property type="entry name" value="GINS_Psf1"/>
</dbReference>
<dbReference type="InterPro" id="IPR056783">
    <property type="entry name" value="PSF1_C"/>
</dbReference>
<dbReference type="PANTHER" id="PTHR12914:SF2">
    <property type="entry name" value="DNA REPLICATION COMPLEX GINS PROTEIN PSF1"/>
    <property type="match status" value="1"/>
</dbReference>
<dbReference type="PANTHER" id="PTHR12914">
    <property type="entry name" value="PARTNER OF SLD5"/>
    <property type="match status" value="1"/>
</dbReference>
<dbReference type="Pfam" id="PF24997">
    <property type="entry name" value="PSF1_C"/>
    <property type="match status" value="1"/>
</dbReference>
<dbReference type="Pfam" id="PF05916">
    <property type="entry name" value="Sld5"/>
    <property type="match status" value="1"/>
</dbReference>
<dbReference type="SUPFAM" id="SSF158573">
    <property type="entry name" value="GINS helical bundle-like"/>
    <property type="match status" value="1"/>
</dbReference>
<reference key="1">
    <citation type="journal article" date="2005" name="Nature">
        <title>The genome of the social amoeba Dictyostelium discoideum.</title>
        <authorList>
            <person name="Eichinger L."/>
            <person name="Pachebat J.A."/>
            <person name="Gloeckner G."/>
            <person name="Rajandream M.A."/>
            <person name="Sucgang R."/>
            <person name="Berriman M."/>
            <person name="Song J."/>
            <person name="Olsen R."/>
            <person name="Szafranski K."/>
            <person name="Xu Q."/>
            <person name="Tunggal B."/>
            <person name="Kummerfeld S."/>
            <person name="Madera M."/>
            <person name="Konfortov B.A."/>
            <person name="Rivero F."/>
            <person name="Bankier A.T."/>
            <person name="Lehmann R."/>
            <person name="Hamlin N."/>
            <person name="Davies R."/>
            <person name="Gaudet P."/>
            <person name="Fey P."/>
            <person name="Pilcher K."/>
            <person name="Chen G."/>
            <person name="Saunders D."/>
            <person name="Sodergren E.J."/>
            <person name="Davis P."/>
            <person name="Kerhornou A."/>
            <person name="Nie X."/>
            <person name="Hall N."/>
            <person name="Anjard C."/>
            <person name="Hemphill L."/>
            <person name="Bason N."/>
            <person name="Farbrother P."/>
            <person name="Desany B."/>
            <person name="Just E."/>
            <person name="Morio T."/>
            <person name="Rost R."/>
            <person name="Churcher C.M."/>
            <person name="Cooper J."/>
            <person name="Haydock S."/>
            <person name="van Driessche N."/>
            <person name="Cronin A."/>
            <person name="Goodhead I."/>
            <person name="Muzny D.M."/>
            <person name="Mourier T."/>
            <person name="Pain A."/>
            <person name="Lu M."/>
            <person name="Harper D."/>
            <person name="Lindsay R."/>
            <person name="Hauser H."/>
            <person name="James K.D."/>
            <person name="Quiles M."/>
            <person name="Madan Babu M."/>
            <person name="Saito T."/>
            <person name="Buchrieser C."/>
            <person name="Wardroper A."/>
            <person name="Felder M."/>
            <person name="Thangavelu M."/>
            <person name="Johnson D."/>
            <person name="Knights A."/>
            <person name="Loulseged H."/>
            <person name="Mungall K.L."/>
            <person name="Oliver K."/>
            <person name="Price C."/>
            <person name="Quail M.A."/>
            <person name="Urushihara H."/>
            <person name="Hernandez J."/>
            <person name="Rabbinowitsch E."/>
            <person name="Steffen D."/>
            <person name="Sanders M."/>
            <person name="Ma J."/>
            <person name="Kohara Y."/>
            <person name="Sharp S."/>
            <person name="Simmonds M.N."/>
            <person name="Spiegler S."/>
            <person name="Tivey A."/>
            <person name="Sugano S."/>
            <person name="White B."/>
            <person name="Walker D."/>
            <person name="Woodward J.R."/>
            <person name="Winckler T."/>
            <person name="Tanaka Y."/>
            <person name="Shaulsky G."/>
            <person name="Schleicher M."/>
            <person name="Weinstock G.M."/>
            <person name="Rosenthal A."/>
            <person name="Cox E.C."/>
            <person name="Chisholm R.L."/>
            <person name="Gibbs R.A."/>
            <person name="Loomis W.F."/>
            <person name="Platzer M."/>
            <person name="Kay R.R."/>
            <person name="Williams J.G."/>
            <person name="Dear P.H."/>
            <person name="Noegel A.A."/>
            <person name="Barrell B.G."/>
            <person name="Kuspa A."/>
        </authorList>
    </citation>
    <scope>NUCLEOTIDE SEQUENCE [LARGE SCALE GENOMIC DNA]</scope>
    <source>
        <strain>AX4</strain>
    </source>
</reference>
<sequence>MFTKTAIELIKELRGTDSIPHYNDTSIKATIDEMIALYEDLIKTITEHKEQKKEPFYLQHAITFHNSINRDKRCILAYLNERLNRIKEYRWSSGQSLLPDQLKERLSQNEIQFFSEYDKILTEYNSKVGLDLTIDPQPPKELYIEVRVIKELGEVVLNSGCTVNLNLNTTHFLKRSDITNLVKNGSLEHII</sequence>
<evidence type="ECO:0000250" key="1"/>
<evidence type="ECO:0000305" key="2"/>
<comment type="function">
    <text evidence="1">The GINS complex plays an essential role in the initiation of DNA replication.</text>
</comment>
<comment type="subunit">
    <text evidence="1">Component of the GINS complex which is a heterotetramer of gins1, gins2, gins3 and gins4.</text>
</comment>
<comment type="subcellular location">
    <subcellularLocation>
        <location evidence="1">Nucleus</location>
    </subcellularLocation>
</comment>
<comment type="similarity">
    <text evidence="2">Belongs to the GINS1/PSF1 family.</text>
</comment>
<keyword id="KW-0235">DNA replication</keyword>
<keyword id="KW-0539">Nucleus</keyword>
<keyword id="KW-1185">Reference proteome</keyword>
<proteinExistence type="inferred from homology"/>